<sequence length="47" mass="5187">MFKRKSTAELAAQMAKLNGNKGFSSEDKGEWKLKLDNAGNGQAVIRF</sequence>
<reference key="1">
    <citation type="submission" date="1997-11" db="EMBL/GenBank/DDBJ databases">
        <authorList>
            <person name="Theimer C.A."/>
            <person name="Krisch H.M."/>
            <person name="Giedroc D.P."/>
        </authorList>
    </citation>
    <scope>NUCLEOTIDE SEQUENCE [GENOMIC DNA]</scope>
</reference>
<evidence type="ECO:0000250" key="1"/>
<organismHost>
    <name type="scientific">Escherichia coli</name>
    <dbReference type="NCBI Taxonomy" id="562"/>
</organismHost>
<name>VHED_BPR06</name>
<protein>
    <recommendedName>
        <fullName>Single-stranded DNA-binding protein</fullName>
    </recommendedName>
    <alternativeName>
        <fullName>Gp32</fullName>
    </alternativeName>
    <alternativeName>
        <fullName>Helix-destabilizing protein</fullName>
    </alternativeName>
</protein>
<accession>O21951</accession>
<dbReference type="EMBL" id="AF033324">
    <property type="protein sequence ID" value="AAB87489.1"/>
    <property type="molecule type" value="Genomic_DNA"/>
</dbReference>
<dbReference type="SMR" id="O21951"/>
<dbReference type="GO" id="GO:0003677">
    <property type="term" value="F:DNA binding"/>
    <property type="evidence" value="ECO:0007669"/>
    <property type="project" value="UniProtKB-KW"/>
</dbReference>
<dbReference type="GO" id="GO:0008270">
    <property type="term" value="F:zinc ion binding"/>
    <property type="evidence" value="ECO:0007669"/>
    <property type="project" value="UniProtKB-KW"/>
</dbReference>
<dbReference type="GO" id="GO:0006310">
    <property type="term" value="P:DNA recombination"/>
    <property type="evidence" value="ECO:0007669"/>
    <property type="project" value="UniProtKB-KW"/>
</dbReference>
<dbReference type="GO" id="GO:0006281">
    <property type="term" value="P:DNA repair"/>
    <property type="evidence" value="ECO:0007669"/>
    <property type="project" value="UniProtKB-KW"/>
</dbReference>
<dbReference type="GO" id="GO:0006260">
    <property type="term" value="P:DNA replication"/>
    <property type="evidence" value="ECO:0007669"/>
    <property type="project" value="UniProtKB-KW"/>
</dbReference>
<dbReference type="Gene3D" id="3.90.198.10">
    <property type="entry name" value="Replication Fork Single-Stranded Dna Binding Protein"/>
    <property type="match status" value="1"/>
</dbReference>
<dbReference type="InterPro" id="IPR012340">
    <property type="entry name" value="NA-bd_OB-fold"/>
</dbReference>
<dbReference type="InterPro" id="IPR044947">
    <property type="entry name" value="Phage_T4_Gp32_ssDNA-bd_sf"/>
</dbReference>
<dbReference type="SUPFAM" id="SSF50249">
    <property type="entry name" value="Nucleic acid-binding proteins"/>
    <property type="match status" value="1"/>
</dbReference>
<keyword id="KW-0227">DNA damage</keyword>
<keyword id="KW-0233">DNA recombination</keyword>
<keyword id="KW-0234">DNA repair</keyword>
<keyword id="KW-0235">DNA replication</keyword>
<keyword id="KW-0238">DNA-binding</keyword>
<keyword id="KW-0479">Metal-binding</keyword>
<keyword id="KW-0862">Zinc</keyword>
<keyword id="KW-0863">Zinc-finger</keyword>
<comment type="function">
    <text>Binds preferentially to single-stranded DNA and therefore, destabilizes double-stranded DNA. It is involved in DNA replication, repair and recombination. Binds ss-DNA as the replication fork advances and stimulates the replisome processivity and accuracy.</text>
</comment>
<comment type="subunit">
    <text evidence="1">Homodimer in the absence of DNA, monomer when binding DNA.</text>
</comment>
<comment type="miscellaneous">
    <text evidence="1">Interacts with the polymerase and the uvsX and uvsY proteins.</text>
</comment>
<organism>
    <name type="scientific">Enterobacteria phage RB6</name>
    <name type="common">Bacteriophage RB6</name>
    <dbReference type="NCBI Taxonomy" id="69610"/>
    <lineage>
        <taxon>Viruses</taxon>
        <taxon>Duplodnaviria</taxon>
        <taxon>Heunggongvirae</taxon>
        <taxon>Uroviricota</taxon>
        <taxon>Caudoviricetes</taxon>
        <taxon>Straboviridae</taxon>
        <taxon>Tevenvirinae</taxon>
        <taxon>Tequatrovirus</taxon>
        <taxon>Tequatrovirus RB3</taxon>
    </lineage>
</organism>
<feature type="chain" id="PRO_0000165054" description="Single-stranded DNA-binding protein">
    <location>
        <begin position="1"/>
        <end position="47" status="greater than"/>
    </location>
</feature>
<feature type="non-terminal residue">
    <location>
        <position position="47"/>
    </location>
</feature>
<proteinExistence type="inferred from homology"/>
<gene>
    <name type="primary">32</name>
    <name type="synonym">ssb</name>
</gene>